<gene>
    <name evidence="1" type="primary">rplS</name>
    <name type="ordered locus">Sama_0892</name>
</gene>
<feature type="chain" id="PRO_1000049737" description="Large ribosomal subunit protein bL19">
    <location>
        <begin position="1"/>
        <end position="117"/>
    </location>
</feature>
<name>RL19_SHEAM</name>
<evidence type="ECO:0000255" key="1">
    <source>
        <dbReference type="HAMAP-Rule" id="MF_00402"/>
    </source>
</evidence>
<evidence type="ECO:0000305" key="2"/>
<keyword id="KW-1185">Reference proteome</keyword>
<keyword id="KW-0687">Ribonucleoprotein</keyword>
<keyword id="KW-0689">Ribosomal protein</keyword>
<accession>A1S3Z3</accession>
<organism>
    <name type="scientific">Shewanella amazonensis (strain ATCC BAA-1098 / SB2B)</name>
    <dbReference type="NCBI Taxonomy" id="326297"/>
    <lineage>
        <taxon>Bacteria</taxon>
        <taxon>Pseudomonadati</taxon>
        <taxon>Pseudomonadota</taxon>
        <taxon>Gammaproteobacteria</taxon>
        <taxon>Alteromonadales</taxon>
        <taxon>Shewanellaceae</taxon>
        <taxon>Shewanella</taxon>
    </lineage>
</organism>
<sequence length="117" mass="13393">MNNIIKMLNDEQMKKDVPDFGPGDTVVVQVRVKEGDKERLQAFEGVVIAKRNRGLHSAFTVRKISNGEGVERAFQTHSPLISSIEVKRRGRVRRAKLYYLRERSGKSARIREKLATK</sequence>
<reference key="1">
    <citation type="submission" date="2006-12" db="EMBL/GenBank/DDBJ databases">
        <title>Complete sequence of Shewanella amazonensis SB2B.</title>
        <authorList>
            <consortium name="US DOE Joint Genome Institute"/>
            <person name="Copeland A."/>
            <person name="Lucas S."/>
            <person name="Lapidus A."/>
            <person name="Barry K."/>
            <person name="Detter J.C."/>
            <person name="Glavina del Rio T."/>
            <person name="Hammon N."/>
            <person name="Israni S."/>
            <person name="Dalin E."/>
            <person name="Tice H."/>
            <person name="Pitluck S."/>
            <person name="Munk A.C."/>
            <person name="Brettin T."/>
            <person name="Bruce D."/>
            <person name="Han C."/>
            <person name="Tapia R."/>
            <person name="Gilna P."/>
            <person name="Schmutz J."/>
            <person name="Larimer F."/>
            <person name="Land M."/>
            <person name="Hauser L."/>
            <person name="Kyrpides N."/>
            <person name="Mikhailova N."/>
            <person name="Fredrickson J."/>
            <person name="Richardson P."/>
        </authorList>
    </citation>
    <scope>NUCLEOTIDE SEQUENCE [LARGE SCALE GENOMIC DNA]</scope>
    <source>
        <strain>ATCC BAA-1098 / SB2B</strain>
    </source>
</reference>
<comment type="function">
    <text evidence="1">This protein is located at the 30S-50S ribosomal subunit interface and may play a role in the structure and function of the aminoacyl-tRNA binding site.</text>
</comment>
<comment type="similarity">
    <text evidence="1">Belongs to the bacterial ribosomal protein bL19 family.</text>
</comment>
<dbReference type="EMBL" id="CP000507">
    <property type="protein sequence ID" value="ABL99099.1"/>
    <property type="molecule type" value="Genomic_DNA"/>
</dbReference>
<dbReference type="RefSeq" id="WP_011759009.1">
    <property type="nucleotide sequence ID" value="NC_008700.1"/>
</dbReference>
<dbReference type="SMR" id="A1S3Z3"/>
<dbReference type="STRING" id="326297.Sama_0892"/>
<dbReference type="KEGG" id="saz:Sama_0892"/>
<dbReference type="eggNOG" id="COG0335">
    <property type="taxonomic scope" value="Bacteria"/>
</dbReference>
<dbReference type="HOGENOM" id="CLU_103507_2_2_6"/>
<dbReference type="OrthoDB" id="9803541at2"/>
<dbReference type="Proteomes" id="UP000009175">
    <property type="component" value="Chromosome"/>
</dbReference>
<dbReference type="GO" id="GO:0022625">
    <property type="term" value="C:cytosolic large ribosomal subunit"/>
    <property type="evidence" value="ECO:0007669"/>
    <property type="project" value="TreeGrafter"/>
</dbReference>
<dbReference type="GO" id="GO:0003735">
    <property type="term" value="F:structural constituent of ribosome"/>
    <property type="evidence" value="ECO:0007669"/>
    <property type="project" value="InterPro"/>
</dbReference>
<dbReference type="GO" id="GO:0006412">
    <property type="term" value="P:translation"/>
    <property type="evidence" value="ECO:0007669"/>
    <property type="project" value="UniProtKB-UniRule"/>
</dbReference>
<dbReference type="FunFam" id="2.30.30.790:FF:000001">
    <property type="entry name" value="50S ribosomal protein L19"/>
    <property type="match status" value="1"/>
</dbReference>
<dbReference type="Gene3D" id="2.30.30.790">
    <property type="match status" value="1"/>
</dbReference>
<dbReference type="HAMAP" id="MF_00402">
    <property type="entry name" value="Ribosomal_bL19"/>
    <property type="match status" value="1"/>
</dbReference>
<dbReference type="InterPro" id="IPR001857">
    <property type="entry name" value="Ribosomal_bL19"/>
</dbReference>
<dbReference type="InterPro" id="IPR018257">
    <property type="entry name" value="Ribosomal_bL19_CS"/>
</dbReference>
<dbReference type="InterPro" id="IPR038657">
    <property type="entry name" value="Ribosomal_bL19_sf"/>
</dbReference>
<dbReference type="InterPro" id="IPR008991">
    <property type="entry name" value="Translation_prot_SH3-like_sf"/>
</dbReference>
<dbReference type="NCBIfam" id="TIGR01024">
    <property type="entry name" value="rplS_bact"/>
    <property type="match status" value="1"/>
</dbReference>
<dbReference type="PANTHER" id="PTHR15680:SF9">
    <property type="entry name" value="LARGE RIBOSOMAL SUBUNIT PROTEIN BL19M"/>
    <property type="match status" value="1"/>
</dbReference>
<dbReference type="PANTHER" id="PTHR15680">
    <property type="entry name" value="RIBOSOMAL PROTEIN L19"/>
    <property type="match status" value="1"/>
</dbReference>
<dbReference type="Pfam" id="PF01245">
    <property type="entry name" value="Ribosomal_L19"/>
    <property type="match status" value="1"/>
</dbReference>
<dbReference type="PIRSF" id="PIRSF002191">
    <property type="entry name" value="Ribosomal_L19"/>
    <property type="match status" value="1"/>
</dbReference>
<dbReference type="PRINTS" id="PR00061">
    <property type="entry name" value="RIBOSOMALL19"/>
</dbReference>
<dbReference type="SUPFAM" id="SSF50104">
    <property type="entry name" value="Translation proteins SH3-like domain"/>
    <property type="match status" value="1"/>
</dbReference>
<dbReference type="PROSITE" id="PS01015">
    <property type="entry name" value="RIBOSOMAL_L19"/>
    <property type="match status" value="1"/>
</dbReference>
<proteinExistence type="inferred from homology"/>
<protein>
    <recommendedName>
        <fullName evidence="1">Large ribosomal subunit protein bL19</fullName>
    </recommendedName>
    <alternativeName>
        <fullName evidence="2">50S ribosomal protein L19</fullName>
    </alternativeName>
</protein>